<name>NFI_THEPD</name>
<organism>
    <name type="scientific">Thermofilum pendens (strain DSM 2475 / Hrk 5)</name>
    <dbReference type="NCBI Taxonomy" id="368408"/>
    <lineage>
        <taxon>Archaea</taxon>
        <taxon>Thermoproteota</taxon>
        <taxon>Thermoprotei</taxon>
        <taxon>Thermofilales</taxon>
        <taxon>Thermofilaceae</taxon>
        <taxon>Thermofilum</taxon>
    </lineage>
</organism>
<dbReference type="EC" id="3.1.21.7" evidence="1"/>
<dbReference type="EMBL" id="CP000505">
    <property type="protein sequence ID" value="ABL78084.1"/>
    <property type="molecule type" value="Genomic_DNA"/>
</dbReference>
<dbReference type="RefSeq" id="WP_011752349.1">
    <property type="nucleotide sequence ID" value="NC_008698.1"/>
</dbReference>
<dbReference type="SMR" id="A1RY04"/>
<dbReference type="STRING" id="368408.Tpen_0682"/>
<dbReference type="EnsemblBacteria" id="ABL78084">
    <property type="protein sequence ID" value="ABL78084"/>
    <property type="gene ID" value="Tpen_0682"/>
</dbReference>
<dbReference type="GeneID" id="4601882"/>
<dbReference type="KEGG" id="tpe:Tpen_0682"/>
<dbReference type="eggNOG" id="arCOG00929">
    <property type="taxonomic scope" value="Archaea"/>
</dbReference>
<dbReference type="HOGENOM" id="CLU_047631_1_1_2"/>
<dbReference type="OrthoDB" id="7885at2157"/>
<dbReference type="Proteomes" id="UP000000641">
    <property type="component" value="Chromosome"/>
</dbReference>
<dbReference type="GO" id="GO:0005737">
    <property type="term" value="C:cytoplasm"/>
    <property type="evidence" value="ECO:0007669"/>
    <property type="project" value="UniProtKB-SubCell"/>
</dbReference>
<dbReference type="GO" id="GO:0043737">
    <property type="term" value="F:deoxyribonuclease V activity"/>
    <property type="evidence" value="ECO:0007669"/>
    <property type="project" value="UniProtKB-UniRule"/>
</dbReference>
<dbReference type="GO" id="GO:0000287">
    <property type="term" value="F:magnesium ion binding"/>
    <property type="evidence" value="ECO:0007669"/>
    <property type="project" value="UniProtKB-UniRule"/>
</dbReference>
<dbReference type="GO" id="GO:0016891">
    <property type="term" value="F:RNA endonuclease activity, producing 5'-phosphomonoesters"/>
    <property type="evidence" value="ECO:0007669"/>
    <property type="project" value="TreeGrafter"/>
</dbReference>
<dbReference type="GO" id="GO:0003727">
    <property type="term" value="F:single-stranded RNA binding"/>
    <property type="evidence" value="ECO:0007669"/>
    <property type="project" value="TreeGrafter"/>
</dbReference>
<dbReference type="GO" id="GO:0006281">
    <property type="term" value="P:DNA repair"/>
    <property type="evidence" value="ECO:0007669"/>
    <property type="project" value="UniProtKB-UniRule"/>
</dbReference>
<dbReference type="CDD" id="cd06559">
    <property type="entry name" value="Endonuclease_V"/>
    <property type="match status" value="1"/>
</dbReference>
<dbReference type="Gene3D" id="3.30.2170.10">
    <property type="entry name" value="archaeoglobus fulgidus dsm 4304 superfamily"/>
    <property type="match status" value="1"/>
</dbReference>
<dbReference type="HAMAP" id="MF_00801">
    <property type="entry name" value="Endonuclease_5"/>
    <property type="match status" value="1"/>
</dbReference>
<dbReference type="InterPro" id="IPR007581">
    <property type="entry name" value="Endonuclease-V"/>
</dbReference>
<dbReference type="PANTHER" id="PTHR28511">
    <property type="entry name" value="ENDONUCLEASE V"/>
    <property type="match status" value="1"/>
</dbReference>
<dbReference type="PANTHER" id="PTHR28511:SF1">
    <property type="entry name" value="ENDONUCLEASE V"/>
    <property type="match status" value="1"/>
</dbReference>
<dbReference type="Pfam" id="PF04493">
    <property type="entry name" value="Endonuclease_5"/>
    <property type="match status" value="1"/>
</dbReference>
<proteinExistence type="inferred from homology"/>
<accession>A1RY04</accession>
<sequence>MRVHRLPENFSLERARRAQLAIARMVLEEDSLPESVRRAAGVDVAFKGDYAFAAAVVVEYPSFSVVDYSVTRTEVRFPYVPTLLAFREVWPAYTALKRLKSEPDVLLVDGNGRLHPFKAGFACHLGVLVDKPTIGVAKKLLVGEVGSWKSGVAPVLYRGEVLGMAVKTSERSKPVFVSIGHKISLNTAVWIVRMFTKRGLRLPEPLRLAHLYATAYARGNMEEKDFYLDEPS</sequence>
<feature type="chain" id="PRO_1000047006" description="Endonuclease V">
    <location>
        <begin position="1"/>
        <end position="232"/>
    </location>
</feature>
<feature type="binding site" evidence="1">
    <location>
        <position position="43"/>
    </location>
    <ligand>
        <name>Mg(2+)</name>
        <dbReference type="ChEBI" id="CHEBI:18420"/>
    </ligand>
</feature>
<feature type="binding site" evidence="1">
    <location>
        <position position="109"/>
    </location>
    <ligand>
        <name>Mg(2+)</name>
        <dbReference type="ChEBI" id="CHEBI:18420"/>
    </ligand>
</feature>
<feature type="site" description="Interaction with target DNA" evidence="1">
    <location>
        <position position="79"/>
    </location>
</feature>
<keyword id="KW-0963">Cytoplasm</keyword>
<keyword id="KW-0227">DNA damage</keyword>
<keyword id="KW-0234">DNA repair</keyword>
<keyword id="KW-0255">Endonuclease</keyword>
<keyword id="KW-0378">Hydrolase</keyword>
<keyword id="KW-0460">Magnesium</keyword>
<keyword id="KW-0479">Metal-binding</keyword>
<keyword id="KW-0540">Nuclease</keyword>
<keyword id="KW-1185">Reference proteome</keyword>
<reference key="1">
    <citation type="journal article" date="2008" name="J. Bacteriol.">
        <title>Genome sequence of Thermofilum pendens reveals an exceptional loss of biosynthetic pathways without genome reduction.</title>
        <authorList>
            <person name="Anderson I."/>
            <person name="Rodriguez J."/>
            <person name="Susanti D."/>
            <person name="Porat I."/>
            <person name="Reich C."/>
            <person name="Ulrich L.E."/>
            <person name="Elkins J.G."/>
            <person name="Mavromatis K."/>
            <person name="Lykidis A."/>
            <person name="Kim E."/>
            <person name="Thompson L.S."/>
            <person name="Nolan M."/>
            <person name="Land M."/>
            <person name="Copeland A."/>
            <person name="Lapidus A."/>
            <person name="Lucas S."/>
            <person name="Detter C."/>
            <person name="Zhulin I.B."/>
            <person name="Olsen G.J."/>
            <person name="Whitman W."/>
            <person name="Mukhopadhyay B."/>
            <person name="Bristow J."/>
            <person name="Kyrpides N."/>
        </authorList>
    </citation>
    <scope>NUCLEOTIDE SEQUENCE [LARGE SCALE GENOMIC DNA]</scope>
    <source>
        <strain>DSM 2475 / Hrk 5</strain>
    </source>
</reference>
<comment type="function">
    <text evidence="1">DNA repair enzyme involved in the repair of deaminated bases. Selectively cleaves double-stranded DNA at the second phosphodiester bond 3' to a deoxyinosine leaving behind the intact lesion on the nicked DNA.</text>
</comment>
<comment type="catalytic activity">
    <reaction evidence="1">
        <text>Endonucleolytic cleavage at apurinic or apyrimidinic sites to products with a 5'-phosphate.</text>
        <dbReference type="EC" id="3.1.21.7"/>
    </reaction>
</comment>
<comment type="cofactor">
    <cofactor evidence="1">
        <name>Mg(2+)</name>
        <dbReference type="ChEBI" id="CHEBI:18420"/>
    </cofactor>
</comment>
<comment type="subcellular location">
    <subcellularLocation>
        <location evidence="1">Cytoplasm</location>
    </subcellularLocation>
</comment>
<comment type="similarity">
    <text evidence="1">Belongs to the endonuclease V family.</text>
</comment>
<evidence type="ECO:0000255" key="1">
    <source>
        <dbReference type="HAMAP-Rule" id="MF_00801"/>
    </source>
</evidence>
<protein>
    <recommendedName>
        <fullName evidence="1">Endonuclease V</fullName>
        <ecNumber evidence="1">3.1.21.7</ecNumber>
    </recommendedName>
    <alternativeName>
        <fullName evidence="1">Deoxyinosine 3'endonuclease</fullName>
    </alternativeName>
    <alternativeName>
        <fullName evidence="1">Deoxyribonuclease V</fullName>
        <shortName evidence="1">DNase V</shortName>
    </alternativeName>
</protein>
<gene>
    <name evidence="1" type="primary">nfi</name>
    <name type="ordered locus">Tpen_0682</name>
</gene>